<gene>
    <name type="ordered locus">BH3766</name>
</gene>
<dbReference type="EMBL" id="BA000004">
    <property type="protein sequence ID" value="BAB07485.1"/>
    <property type="molecule type" value="Genomic_DNA"/>
</dbReference>
<dbReference type="PIR" id="F84120">
    <property type="entry name" value="F84120"/>
</dbReference>
<dbReference type="SMR" id="Q9K6G3"/>
<dbReference type="STRING" id="272558.gene:10729679"/>
<dbReference type="KEGG" id="bha:BH3766"/>
<dbReference type="eggNOG" id="COG4475">
    <property type="taxonomic scope" value="Bacteria"/>
</dbReference>
<dbReference type="HOGENOM" id="CLU_106658_0_0_9"/>
<dbReference type="Proteomes" id="UP000001258">
    <property type="component" value="Chromosome"/>
</dbReference>
<dbReference type="Gene3D" id="3.40.50.10360">
    <property type="entry name" value="Hypothetical protein TT1679"/>
    <property type="match status" value="1"/>
</dbReference>
<dbReference type="HAMAP" id="MF_00800">
    <property type="entry name" value="UPF0340"/>
    <property type="match status" value="1"/>
</dbReference>
<dbReference type="InterPro" id="IPR028345">
    <property type="entry name" value="Antibiotic_NAT-like"/>
</dbReference>
<dbReference type="InterPro" id="IPR006340">
    <property type="entry name" value="DUF436"/>
</dbReference>
<dbReference type="NCBIfam" id="TIGR01440">
    <property type="entry name" value="TIGR01440 family protein"/>
    <property type="match status" value="1"/>
</dbReference>
<dbReference type="Pfam" id="PF04260">
    <property type="entry name" value="DUF436"/>
    <property type="match status" value="1"/>
</dbReference>
<dbReference type="PIRSF" id="PIRSF007510">
    <property type="entry name" value="UCP007510"/>
    <property type="match status" value="1"/>
</dbReference>
<dbReference type="SUPFAM" id="SSF110710">
    <property type="entry name" value="TTHA0583/YokD-like"/>
    <property type="match status" value="1"/>
</dbReference>
<sequence>MMTIQQQLETVLGDLQKAKPLSSKHLLVIGVSTSEVAGKQIGTNSSKDVAAALYAALFSYQQKTGVALAFQCCEHLNRALVMERDEAEARGYEEVAVIPVRKAGGAMATYAFTQFRDPVIVEQIRADAGIDIGDTFIGMHLKRVAVPVRSSISAIGDAHVTMAYSRPKLIGGVRANYERTEEHESFRC</sequence>
<evidence type="ECO:0000255" key="1">
    <source>
        <dbReference type="HAMAP-Rule" id="MF_00800"/>
    </source>
</evidence>
<proteinExistence type="inferred from homology"/>
<name>Y3766_HALH5</name>
<reference key="1">
    <citation type="journal article" date="2000" name="Nucleic Acids Res.">
        <title>Complete genome sequence of the alkaliphilic bacterium Bacillus halodurans and genomic sequence comparison with Bacillus subtilis.</title>
        <authorList>
            <person name="Takami H."/>
            <person name="Nakasone K."/>
            <person name="Takaki Y."/>
            <person name="Maeno G."/>
            <person name="Sasaki R."/>
            <person name="Masui N."/>
            <person name="Fuji F."/>
            <person name="Hirama C."/>
            <person name="Nakamura Y."/>
            <person name="Ogasawara N."/>
            <person name="Kuhara S."/>
            <person name="Horikoshi K."/>
        </authorList>
    </citation>
    <scope>NUCLEOTIDE SEQUENCE [LARGE SCALE GENOMIC DNA]</scope>
    <source>
        <strain>ATCC BAA-125 / DSM 18197 / FERM 7344 / JCM 9153 / C-125</strain>
    </source>
</reference>
<feature type="chain" id="PRO_0000213003" description="UPF0340 protein BH3766">
    <location>
        <begin position="1"/>
        <end position="188"/>
    </location>
</feature>
<protein>
    <recommendedName>
        <fullName evidence="1">UPF0340 protein BH3766</fullName>
    </recommendedName>
</protein>
<accession>Q9K6G3</accession>
<comment type="similarity">
    <text evidence="1">Belongs to the UPF0340 family.</text>
</comment>
<keyword id="KW-1185">Reference proteome</keyword>
<organism>
    <name type="scientific">Halalkalibacterium halodurans (strain ATCC BAA-125 / DSM 18197 / FERM 7344 / JCM 9153 / C-125)</name>
    <name type="common">Bacillus halodurans</name>
    <dbReference type="NCBI Taxonomy" id="272558"/>
    <lineage>
        <taxon>Bacteria</taxon>
        <taxon>Bacillati</taxon>
        <taxon>Bacillota</taxon>
        <taxon>Bacilli</taxon>
        <taxon>Bacillales</taxon>
        <taxon>Bacillaceae</taxon>
        <taxon>Halalkalibacterium (ex Joshi et al. 2022)</taxon>
    </lineage>
</organism>